<reference key="1">
    <citation type="journal article" date="2005" name="Nat. Biotechnol.">
        <title>The complete genome sequence of the meat-borne lactic acid bacterium Lactobacillus sakei 23K.</title>
        <authorList>
            <person name="Chaillou S."/>
            <person name="Champomier-Verges M.-C."/>
            <person name="Cornet M."/>
            <person name="Crutz-Le Coq A.-M."/>
            <person name="Dudez A.-M."/>
            <person name="Martin V."/>
            <person name="Beaufils S."/>
            <person name="Darbon-Rongere E."/>
            <person name="Bossy R."/>
            <person name="Loux V."/>
            <person name="Zagorec M."/>
        </authorList>
    </citation>
    <scope>NUCLEOTIDE SEQUENCE [LARGE SCALE GENOMIC DNA]</scope>
    <source>
        <strain>23K</strain>
    </source>
</reference>
<accession>Q38XR8</accession>
<sequence length="230" mass="25965">MDAALVSELRARYGIEFNNLALLDEAFTHSSYVNEHRELGLRDNERLEFLGDAVMEITVSEYLYKKYPDWPEGKLTRLRAAIVCTKSFSSFSKEAHFDRYIRLGKGEEKNGARARATLLEDLFEAFNGALFLDQGRDAVVDFVSQVIFPKIEAGEFSDQTDYKTNLQEFLQQDGEIEIDYQLLAEVGPSHDRQFEVDVLVGDRVLGSGVGRNKKAAEQAAAKKALEQLKA</sequence>
<dbReference type="EC" id="3.1.26.3" evidence="1"/>
<dbReference type="EMBL" id="CR936503">
    <property type="protein sequence ID" value="CAI55011.1"/>
    <property type="molecule type" value="Genomic_DNA"/>
</dbReference>
<dbReference type="SMR" id="Q38XR8"/>
<dbReference type="STRING" id="314315.LCA_0707"/>
<dbReference type="KEGG" id="lsa:LCA_0707"/>
<dbReference type="eggNOG" id="COG0571">
    <property type="taxonomic scope" value="Bacteria"/>
</dbReference>
<dbReference type="HOGENOM" id="CLU_000907_1_3_9"/>
<dbReference type="OrthoDB" id="9805026at2"/>
<dbReference type="Proteomes" id="UP000002707">
    <property type="component" value="Chromosome"/>
</dbReference>
<dbReference type="GO" id="GO:0005737">
    <property type="term" value="C:cytoplasm"/>
    <property type="evidence" value="ECO:0007669"/>
    <property type="project" value="UniProtKB-SubCell"/>
</dbReference>
<dbReference type="GO" id="GO:0003725">
    <property type="term" value="F:double-stranded RNA binding"/>
    <property type="evidence" value="ECO:0007669"/>
    <property type="project" value="TreeGrafter"/>
</dbReference>
<dbReference type="GO" id="GO:0046872">
    <property type="term" value="F:metal ion binding"/>
    <property type="evidence" value="ECO:0007669"/>
    <property type="project" value="UniProtKB-KW"/>
</dbReference>
<dbReference type="GO" id="GO:0004525">
    <property type="term" value="F:ribonuclease III activity"/>
    <property type="evidence" value="ECO:0007669"/>
    <property type="project" value="UniProtKB-UniRule"/>
</dbReference>
<dbReference type="GO" id="GO:0019843">
    <property type="term" value="F:rRNA binding"/>
    <property type="evidence" value="ECO:0007669"/>
    <property type="project" value="UniProtKB-KW"/>
</dbReference>
<dbReference type="GO" id="GO:0006397">
    <property type="term" value="P:mRNA processing"/>
    <property type="evidence" value="ECO:0007669"/>
    <property type="project" value="UniProtKB-UniRule"/>
</dbReference>
<dbReference type="GO" id="GO:0010468">
    <property type="term" value="P:regulation of gene expression"/>
    <property type="evidence" value="ECO:0007669"/>
    <property type="project" value="TreeGrafter"/>
</dbReference>
<dbReference type="GO" id="GO:0006364">
    <property type="term" value="P:rRNA processing"/>
    <property type="evidence" value="ECO:0007669"/>
    <property type="project" value="UniProtKB-UniRule"/>
</dbReference>
<dbReference type="GO" id="GO:0008033">
    <property type="term" value="P:tRNA processing"/>
    <property type="evidence" value="ECO:0007669"/>
    <property type="project" value="UniProtKB-KW"/>
</dbReference>
<dbReference type="CDD" id="cd10845">
    <property type="entry name" value="DSRM_RNAse_III_family"/>
    <property type="match status" value="1"/>
</dbReference>
<dbReference type="CDD" id="cd00593">
    <property type="entry name" value="RIBOc"/>
    <property type="match status" value="1"/>
</dbReference>
<dbReference type="FunFam" id="1.10.1520.10:FF:000001">
    <property type="entry name" value="Ribonuclease 3"/>
    <property type="match status" value="1"/>
</dbReference>
<dbReference type="FunFam" id="3.30.160.20:FF:000003">
    <property type="entry name" value="Ribonuclease 3"/>
    <property type="match status" value="1"/>
</dbReference>
<dbReference type="Gene3D" id="3.30.160.20">
    <property type="match status" value="1"/>
</dbReference>
<dbReference type="Gene3D" id="1.10.1520.10">
    <property type="entry name" value="Ribonuclease III domain"/>
    <property type="match status" value="1"/>
</dbReference>
<dbReference type="HAMAP" id="MF_00104">
    <property type="entry name" value="RNase_III"/>
    <property type="match status" value="1"/>
</dbReference>
<dbReference type="InterPro" id="IPR014720">
    <property type="entry name" value="dsRBD_dom"/>
</dbReference>
<dbReference type="InterPro" id="IPR011907">
    <property type="entry name" value="RNase_III"/>
</dbReference>
<dbReference type="InterPro" id="IPR000999">
    <property type="entry name" value="RNase_III_dom"/>
</dbReference>
<dbReference type="InterPro" id="IPR036389">
    <property type="entry name" value="RNase_III_sf"/>
</dbReference>
<dbReference type="NCBIfam" id="TIGR02191">
    <property type="entry name" value="RNaseIII"/>
    <property type="match status" value="1"/>
</dbReference>
<dbReference type="PANTHER" id="PTHR11207:SF0">
    <property type="entry name" value="RIBONUCLEASE 3"/>
    <property type="match status" value="1"/>
</dbReference>
<dbReference type="PANTHER" id="PTHR11207">
    <property type="entry name" value="RIBONUCLEASE III"/>
    <property type="match status" value="1"/>
</dbReference>
<dbReference type="Pfam" id="PF00035">
    <property type="entry name" value="dsrm"/>
    <property type="match status" value="1"/>
</dbReference>
<dbReference type="Pfam" id="PF14622">
    <property type="entry name" value="Ribonucleas_3_3"/>
    <property type="match status" value="1"/>
</dbReference>
<dbReference type="SMART" id="SM00358">
    <property type="entry name" value="DSRM"/>
    <property type="match status" value="1"/>
</dbReference>
<dbReference type="SMART" id="SM00535">
    <property type="entry name" value="RIBOc"/>
    <property type="match status" value="1"/>
</dbReference>
<dbReference type="SUPFAM" id="SSF54768">
    <property type="entry name" value="dsRNA-binding domain-like"/>
    <property type="match status" value="1"/>
</dbReference>
<dbReference type="SUPFAM" id="SSF69065">
    <property type="entry name" value="RNase III domain-like"/>
    <property type="match status" value="1"/>
</dbReference>
<dbReference type="PROSITE" id="PS50137">
    <property type="entry name" value="DS_RBD"/>
    <property type="match status" value="1"/>
</dbReference>
<dbReference type="PROSITE" id="PS00517">
    <property type="entry name" value="RNASE_3_1"/>
    <property type="match status" value="1"/>
</dbReference>
<dbReference type="PROSITE" id="PS50142">
    <property type="entry name" value="RNASE_3_2"/>
    <property type="match status" value="1"/>
</dbReference>
<organism>
    <name type="scientific">Latilactobacillus sakei subsp. sakei (strain 23K)</name>
    <name type="common">Lactobacillus sakei subsp. sakei</name>
    <dbReference type="NCBI Taxonomy" id="314315"/>
    <lineage>
        <taxon>Bacteria</taxon>
        <taxon>Bacillati</taxon>
        <taxon>Bacillota</taxon>
        <taxon>Bacilli</taxon>
        <taxon>Lactobacillales</taxon>
        <taxon>Lactobacillaceae</taxon>
        <taxon>Latilactobacillus</taxon>
    </lineage>
</organism>
<evidence type="ECO:0000255" key="1">
    <source>
        <dbReference type="HAMAP-Rule" id="MF_00104"/>
    </source>
</evidence>
<name>RNC_LATSS</name>
<gene>
    <name evidence="1" type="primary">rnc</name>
    <name type="ordered locus">LCA_0707</name>
</gene>
<comment type="function">
    <text evidence="1">Digests double-stranded RNA. Involved in the processing of primary rRNA transcript to yield the immediate precursors to the large and small rRNAs (23S and 16S). Processes some mRNAs, and tRNAs when they are encoded in the rRNA operon. Processes pre-crRNA and tracrRNA of type II CRISPR loci if present in the organism.</text>
</comment>
<comment type="catalytic activity">
    <reaction evidence="1">
        <text>Endonucleolytic cleavage to 5'-phosphomonoester.</text>
        <dbReference type="EC" id="3.1.26.3"/>
    </reaction>
</comment>
<comment type="cofactor">
    <cofactor evidence="1">
        <name>Mg(2+)</name>
        <dbReference type="ChEBI" id="CHEBI:18420"/>
    </cofactor>
</comment>
<comment type="subunit">
    <text evidence="1">Homodimer.</text>
</comment>
<comment type="subcellular location">
    <subcellularLocation>
        <location evidence="1">Cytoplasm</location>
    </subcellularLocation>
</comment>
<comment type="similarity">
    <text evidence="1">Belongs to the ribonuclease III family.</text>
</comment>
<feature type="chain" id="PRO_0000228541" description="Ribonuclease 3">
    <location>
        <begin position="1"/>
        <end position="230"/>
    </location>
</feature>
<feature type="domain" description="RNase III" evidence="1">
    <location>
        <begin position="6"/>
        <end position="135"/>
    </location>
</feature>
<feature type="domain" description="DRBM" evidence="1">
    <location>
        <begin position="161"/>
        <end position="230"/>
    </location>
</feature>
<feature type="active site" evidence="1">
    <location>
        <position position="52"/>
    </location>
</feature>
<feature type="active site" evidence="1">
    <location>
        <position position="124"/>
    </location>
</feature>
<feature type="binding site" evidence="1">
    <location>
        <position position="48"/>
    </location>
    <ligand>
        <name>Mg(2+)</name>
        <dbReference type="ChEBI" id="CHEBI:18420"/>
    </ligand>
</feature>
<feature type="binding site" evidence="1">
    <location>
        <position position="121"/>
    </location>
    <ligand>
        <name>Mg(2+)</name>
        <dbReference type="ChEBI" id="CHEBI:18420"/>
    </ligand>
</feature>
<feature type="binding site" evidence="1">
    <location>
        <position position="124"/>
    </location>
    <ligand>
        <name>Mg(2+)</name>
        <dbReference type="ChEBI" id="CHEBI:18420"/>
    </ligand>
</feature>
<proteinExistence type="inferred from homology"/>
<keyword id="KW-0963">Cytoplasm</keyword>
<keyword id="KW-0255">Endonuclease</keyword>
<keyword id="KW-0378">Hydrolase</keyword>
<keyword id="KW-0460">Magnesium</keyword>
<keyword id="KW-0479">Metal-binding</keyword>
<keyword id="KW-0507">mRNA processing</keyword>
<keyword id="KW-0540">Nuclease</keyword>
<keyword id="KW-1185">Reference proteome</keyword>
<keyword id="KW-0694">RNA-binding</keyword>
<keyword id="KW-0698">rRNA processing</keyword>
<keyword id="KW-0699">rRNA-binding</keyword>
<keyword id="KW-0819">tRNA processing</keyword>
<protein>
    <recommendedName>
        <fullName evidence="1">Ribonuclease 3</fullName>
        <ecNumber evidence="1">3.1.26.3</ecNumber>
    </recommendedName>
    <alternativeName>
        <fullName evidence="1">Ribonuclease III</fullName>
        <shortName evidence="1">RNase III</shortName>
    </alternativeName>
</protein>